<proteinExistence type="inferred from homology"/>
<name>HEM3_CHLT3</name>
<sequence length="314" mass="34805">MKKALIIGTRSSPLALWQAEFIKAELSKHYPSLDISLRHIKTTGDKILDAPLAKIGDKGLFTREIEHVMLRNEIDLAVHSLKDLPTETPEGLVITAITEREDNRDVLISKGKYTLKTLPQGAIVATSSLRRRSQLLHLRPDLEVIDMRGNLNTRFKRFEEGDAEAMLLAFAGVHRLEFSEHIAEIISFDDILPAVGQGALGIETRIDDEETRELLKVLNHAETELCTKCERSLLRTLEGGCQIPIGAHARIENGTFHFATYVGSIDGKRAIKKSLSRENVTTVEEAEQIGIEVADAARAAGANEILCEIRTDNA</sequence>
<organism>
    <name type="scientific">Chloroherpeton thalassium (strain ATCC 35110 / GB-78)</name>
    <dbReference type="NCBI Taxonomy" id="517418"/>
    <lineage>
        <taxon>Bacteria</taxon>
        <taxon>Pseudomonadati</taxon>
        <taxon>Chlorobiota</taxon>
        <taxon>Chlorobiia</taxon>
        <taxon>Chlorobiales</taxon>
        <taxon>Chloroherpetonaceae</taxon>
        <taxon>Chloroherpeton</taxon>
    </lineage>
</organism>
<dbReference type="EC" id="2.5.1.61" evidence="1"/>
<dbReference type="EMBL" id="CP001100">
    <property type="protein sequence ID" value="ACF14741.1"/>
    <property type="molecule type" value="Genomic_DNA"/>
</dbReference>
<dbReference type="RefSeq" id="WP_012500824.1">
    <property type="nucleotide sequence ID" value="NC_011026.1"/>
</dbReference>
<dbReference type="SMR" id="B3QWI1"/>
<dbReference type="STRING" id="517418.Ctha_2290"/>
<dbReference type="KEGG" id="cts:Ctha_2290"/>
<dbReference type="eggNOG" id="COG0181">
    <property type="taxonomic scope" value="Bacteria"/>
</dbReference>
<dbReference type="HOGENOM" id="CLU_019704_0_2_10"/>
<dbReference type="OrthoDB" id="9810298at2"/>
<dbReference type="UniPathway" id="UPA00251">
    <property type="reaction ID" value="UER00319"/>
</dbReference>
<dbReference type="UniPathway" id="UPA00668"/>
<dbReference type="Proteomes" id="UP000001208">
    <property type="component" value="Chromosome"/>
</dbReference>
<dbReference type="GO" id="GO:0005737">
    <property type="term" value="C:cytoplasm"/>
    <property type="evidence" value="ECO:0007669"/>
    <property type="project" value="TreeGrafter"/>
</dbReference>
<dbReference type="GO" id="GO:0004418">
    <property type="term" value="F:hydroxymethylbilane synthase activity"/>
    <property type="evidence" value="ECO:0007669"/>
    <property type="project" value="UniProtKB-UniRule"/>
</dbReference>
<dbReference type="GO" id="GO:0015995">
    <property type="term" value="P:chlorophyll biosynthetic process"/>
    <property type="evidence" value="ECO:0007669"/>
    <property type="project" value="UniProtKB-UniRule"/>
</dbReference>
<dbReference type="GO" id="GO:0006782">
    <property type="term" value="P:protoporphyrinogen IX biosynthetic process"/>
    <property type="evidence" value="ECO:0007669"/>
    <property type="project" value="UniProtKB-UniRule"/>
</dbReference>
<dbReference type="CDD" id="cd13646">
    <property type="entry name" value="PBP2_EcHMBS_like"/>
    <property type="match status" value="1"/>
</dbReference>
<dbReference type="FunFam" id="3.40.190.10:FF:000004">
    <property type="entry name" value="Porphobilinogen deaminase"/>
    <property type="match status" value="1"/>
</dbReference>
<dbReference type="FunFam" id="3.40.190.10:FF:000005">
    <property type="entry name" value="Porphobilinogen deaminase"/>
    <property type="match status" value="1"/>
</dbReference>
<dbReference type="Gene3D" id="3.40.190.10">
    <property type="entry name" value="Periplasmic binding protein-like II"/>
    <property type="match status" value="2"/>
</dbReference>
<dbReference type="Gene3D" id="3.30.160.40">
    <property type="entry name" value="Porphobilinogen deaminase, C-terminal domain"/>
    <property type="match status" value="1"/>
</dbReference>
<dbReference type="HAMAP" id="MF_00260">
    <property type="entry name" value="Porphobil_deam"/>
    <property type="match status" value="1"/>
</dbReference>
<dbReference type="InterPro" id="IPR000860">
    <property type="entry name" value="HemC"/>
</dbReference>
<dbReference type="InterPro" id="IPR022419">
    <property type="entry name" value="Porphobilin_deaminase_cofac_BS"/>
</dbReference>
<dbReference type="InterPro" id="IPR022417">
    <property type="entry name" value="Porphobilin_deaminase_N"/>
</dbReference>
<dbReference type="InterPro" id="IPR022418">
    <property type="entry name" value="Porphobilinogen_deaminase_C"/>
</dbReference>
<dbReference type="InterPro" id="IPR036803">
    <property type="entry name" value="Porphobilinogen_deaminase_C_sf"/>
</dbReference>
<dbReference type="NCBIfam" id="TIGR00212">
    <property type="entry name" value="hemC"/>
    <property type="match status" value="1"/>
</dbReference>
<dbReference type="PANTHER" id="PTHR11557">
    <property type="entry name" value="PORPHOBILINOGEN DEAMINASE"/>
    <property type="match status" value="1"/>
</dbReference>
<dbReference type="PANTHER" id="PTHR11557:SF0">
    <property type="entry name" value="PORPHOBILINOGEN DEAMINASE"/>
    <property type="match status" value="1"/>
</dbReference>
<dbReference type="Pfam" id="PF01379">
    <property type="entry name" value="Porphobil_deam"/>
    <property type="match status" value="1"/>
</dbReference>
<dbReference type="Pfam" id="PF03900">
    <property type="entry name" value="Porphobil_deamC"/>
    <property type="match status" value="1"/>
</dbReference>
<dbReference type="PIRSF" id="PIRSF001438">
    <property type="entry name" value="4pyrrol_synth_OHMeBilane_synth"/>
    <property type="match status" value="1"/>
</dbReference>
<dbReference type="PRINTS" id="PR00151">
    <property type="entry name" value="PORPHBDMNASE"/>
</dbReference>
<dbReference type="SUPFAM" id="SSF53850">
    <property type="entry name" value="Periplasmic binding protein-like II"/>
    <property type="match status" value="1"/>
</dbReference>
<dbReference type="SUPFAM" id="SSF54782">
    <property type="entry name" value="Porphobilinogen deaminase (hydroxymethylbilane synthase), C-terminal domain"/>
    <property type="match status" value="1"/>
</dbReference>
<dbReference type="PROSITE" id="PS00533">
    <property type="entry name" value="PORPHOBILINOGEN_DEAM"/>
    <property type="match status" value="1"/>
</dbReference>
<keyword id="KW-0149">Chlorophyll biosynthesis</keyword>
<keyword id="KW-0627">Porphyrin biosynthesis</keyword>
<keyword id="KW-1185">Reference proteome</keyword>
<keyword id="KW-0808">Transferase</keyword>
<comment type="function">
    <text evidence="1">Tetrapolymerization of the monopyrrole PBG into the hydroxymethylbilane pre-uroporphyrinogen in several discrete steps.</text>
</comment>
<comment type="catalytic activity">
    <reaction evidence="1">
        <text>4 porphobilinogen + H2O = hydroxymethylbilane + 4 NH4(+)</text>
        <dbReference type="Rhea" id="RHEA:13185"/>
        <dbReference type="ChEBI" id="CHEBI:15377"/>
        <dbReference type="ChEBI" id="CHEBI:28938"/>
        <dbReference type="ChEBI" id="CHEBI:57845"/>
        <dbReference type="ChEBI" id="CHEBI:58126"/>
        <dbReference type="EC" id="2.5.1.61"/>
    </reaction>
</comment>
<comment type="cofactor">
    <cofactor evidence="1">
        <name>dipyrromethane</name>
        <dbReference type="ChEBI" id="CHEBI:60342"/>
    </cofactor>
    <text evidence="1">Binds 1 dipyrromethane group covalently.</text>
</comment>
<comment type="pathway">
    <text evidence="1">Porphyrin-containing compound metabolism; protoporphyrin-IX biosynthesis; coproporphyrinogen-III from 5-aminolevulinate: step 2/4.</text>
</comment>
<comment type="pathway">
    <text evidence="1">Porphyrin-containing compound metabolism; chlorophyll biosynthesis.</text>
</comment>
<comment type="subunit">
    <text evidence="1">Monomer.</text>
</comment>
<comment type="miscellaneous">
    <text evidence="1">The porphobilinogen subunits are added to the dipyrromethane group.</text>
</comment>
<comment type="similarity">
    <text evidence="1">Belongs to the HMBS family.</text>
</comment>
<evidence type="ECO:0000255" key="1">
    <source>
        <dbReference type="HAMAP-Rule" id="MF_00260"/>
    </source>
</evidence>
<accession>B3QWI1</accession>
<feature type="chain" id="PRO_1000114143" description="Porphobilinogen deaminase">
    <location>
        <begin position="1"/>
        <end position="314"/>
    </location>
</feature>
<feature type="modified residue" description="S-(dipyrrolylmethanemethyl)cysteine" evidence="1">
    <location>
        <position position="241"/>
    </location>
</feature>
<reference key="1">
    <citation type="submission" date="2008-06" db="EMBL/GenBank/DDBJ databases">
        <title>Complete sequence of Chloroherpeton thalassium ATCC 35110.</title>
        <authorList>
            <consortium name="US DOE Joint Genome Institute"/>
            <person name="Lucas S."/>
            <person name="Copeland A."/>
            <person name="Lapidus A."/>
            <person name="Glavina del Rio T."/>
            <person name="Dalin E."/>
            <person name="Tice H."/>
            <person name="Bruce D."/>
            <person name="Goodwin L."/>
            <person name="Pitluck S."/>
            <person name="Schmutz J."/>
            <person name="Larimer F."/>
            <person name="Land M."/>
            <person name="Hauser L."/>
            <person name="Kyrpides N."/>
            <person name="Mikhailova N."/>
            <person name="Liu Z."/>
            <person name="Li T."/>
            <person name="Zhao F."/>
            <person name="Overmann J."/>
            <person name="Bryant D.A."/>
            <person name="Richardson P."/>
        </authorList>
    </citation>
    <scope>NUCLEOTIDE SEQUENCE [LARGE SCALE GENOMIC DNA]</scope>
    <source>
        <strain>ATCC 35110 / GB-78</strain>
    </source>
</reference>
<protein>
    <recommendedName>
        <fullName evidence="1">Porphobilinogen deaminase</fullName>
        <shortName evidence="1">PBG</shortName>
        <ecNumber evidence="1">2.5.1.61</ecNumber>
    </recommendedName>
    <alternativeName>
        <fullName evidence="1">Hydroxymethylbilane synthase</fullName>
        <shortName evidence="1">HMBS</shortName>
    </alternativeName>
    <alternativeName>
        <fullName evidence="1">Pre-uroporphyrinogen synthase</fullName>
    </alternativeName>
</protein>
<gene>
    <name evidence="1" type="primary">hemC</name>
    <name type="ordered locus">Ctha_2290</name>
</gene>